<protein>
    <recommendedName>
        <fullName evidence="1">Small ribosomal subunit protein eS24</fullName>
    </recommendedName>
    <alternativeName>
        <fullName evidence="2">30S ribosomal protein S24e</fullName>
    </alternativeName>
</protein>
<name>RS24_IGNH4</name>
<keyword id="KW-1185">Reference proteome</keyword>
<keyword id="KW-0687">Ribonucleoprotein</keyword>
<keyword id="KW-0689">Ribosomal protein</keyword>
<accession>A8A953</accession>
<reference key="1">
    <citation type="journal article" date="2008" name="Genome Biol.">
        <title>A genomic analysis of the archaeal system Ignicoccus hospitalis-Nanoarchaeum equitans.</title>
        <authorList>
            <person name="Podar M."/>
            <person name="Anderson I."/>
            <person name="Makarova K.S."/>
            <person name="Elkins J.G."/>
            <person name="Ivanova N."/>
            <person name="Wall M.A."/>
            <person name="Lykidis A."/>
            <person name="Mavromatis K."/>
            <person name="Sun H."/>
            <person name="Hudson M.E."/>
            <person name="Chen W."/>
            <person name="Deciu C."/>
            <person name="Hutchison D."/>
            <person name="Eads J.R."/>
            <person name="Anderson A."/>
            <person name="Fernandes F."/>
            <person name="Szeto E."/>
            <person name="Lapidus A."/>
            <person name="Kyrpides N.C."/>
            <person name="Saier M.H. Jr."/>
            <person name="Richardson P.M."/>
            <person name="Rachel R."/>
            <person name="Huber H."/>
            <person name="Eisen J.A."/>
            <person name="Koonin E.V."/>
            <person name="Keller M."/>
            <person name="Stetter K.O."/>
        </authorList>
    </citation>
    <scope>NUCLEOTIDE SEQUENCE [LARGE SCALE GENOMIC DNA]</scope>
    <source>
        <strain>KIN4/I / DSM 18386 / JCM 14125</strain>
    </source>
</reference>
<proteinExistence type="inferred from homology"/>
<feature type="chain" id="PRO_1000017737" description="Small ribosomal subunit protein eS24">
    <location>
        <begin position="1"/>
        <end position="105"/>
    </location>
</feature>
<comment type="similarity">
    <text evidence="1">Belongs to the eukaryotic ribosomal protein eS24 family.</text>
</comment>
<dbReference type="EMBL" id="CP000816">
    <property type="protein sequence ID" value="ABU81455.1"/>
    <property type="molecule type" value="Genomic_DNA"/>
</dbReference>
<dbReference type="RefSeq" id="WP_011998307.1">
    <property type="nucleotide sequence ID" value="NC_009776.1"/>
</dbReference>
<dbReference type="SMR" id="A8A953"/>
<dbReference type="STRING" id="453591.Igni_0271"/>
<dbReference type="GeneID" id="5562249"/>
<dbReference type="KEGG" id="iho:Igni_0271"/>
<dbReference type="eggNOG" id="arCOG04182">
    <property type="taxonomic scope" value="Archaea"/>
</dbReference>
<dbReference type="HOGENOM" id="CLU_107248_3_2_2"/>
<dbReference type="OrthoDB" id="27533at2157"/>
<dbReference type="PhylomeDB" id="A8A953"/>
<dbReference type="Proteomes" id="UP000000262">
    <property type="component" value="Chromosome"/>
</dbReference>
<dbReference type="GO" id="GO:1990904">
    <property type="term" value="C:ribonucleoprotein complex"/>
    <property type="evidence" value="ECO:0007669"/>
    <property type="project" value="UniProtKB-KW"/>
</dbReference>
<dbReference type="GO" id="GO:0005840">
    <property type="term" value="C:ribosome"/>
    <property type="evidence" value="ECO:0007669"/>
    <property type="project" value="UniProtKB-KW"/>
</dbReference>
<dbReference type="GO" id="GO:0003735">
    <property type="term" value="F:structural constituent of ribosome"/>
    <property type="evidence" value="ECO:0007669"/>
    <property type="project" value="InterPro"/>
</dbReference>
<dbReference type="GO" id="GO:0006412">
    <property type="term" value="P:translation"/>
    <property type="evidence" value="ECO:0007669"/>
    <property type="project" value="UniProtKB-UniRule"/>
</dbReference>
<dbReference type="Gene3D" id="3.30.70.3370">
    <property type="match status" value="1"/>
</dbReference>
<dbReference type="HAMAP" id="MF_00545">
    <property type="entry name" value="Ribosomal_eS24"/>
    <property type="match status" value="1"/>
</dbReference>
<dbReference type="InterPro" id="IPR053709">
    <property type="entry name" value="eRP_eS24_sf"/>
</dbReference>
<dbReference type="InterPro" id="IPR001976">
    <property type="entry name" value="Ribosomal_eS24"/>
</dbReference>
<dbReference type="InterPro" id="IPR018098">
    <property type="entry name" value="Ribosomal_eS24_CS"/>
</dbReference>
<dbReference type="InterPro" id="IPR012678">
    <property type="entry name" value="Ribosomal_uL23/eL15/eS24_sf"/>
</dbReference>
<dbReference type="PANTHER" id="PTHR10496">
    <property type="entry name" value="40S RIBOSOMAL PROTEIN S24"/>
    <property type="match status" value="1"/>
</dbReference>
<dbReference type="Pfam" id="PF01282">
    <property type="entry name" value="Ribosomal_S24e"/>
    <property type="match status" value="1"/>
</dbReference>
<dbReference type="SUPFAM" id="SSF54189">
    <property type="entry name" value="Ribosomal proteins S24e, L23 and L15e"/>
    <property type="match status" value="1"/>
</dbReference>
<dbReference type="PROSITE" id="PS00529">
    <property type="entry name" value="RIBOSOMAL_S24E"/>
    <property type="match status" value="1"/>
</dbReference>
<organism>
    <name type="scientific">Ignicoccus hospitalis (strain KIN4/I / DSM 18386 / JCM 14125)</name>
    <dbReference type="NCBI Taxonomy" id="453591"/>
    <lineage>
        <taxon>Archaea</taxon>
        <taxon>Thermoproteota</taxon>
        <taxon>Thermoprotei</taxon>
        <taxon>Desulfurococcales</taxon>
        <taxon>Desulfurococcaceae</taxon>
        <taxon>Ignicoccus</taxon>
    </lineage>
</organism>
<sequence>MSEFEVQVVNKRWNPLAEREELDLVLVHVAKPTPSRCEVEEKVAQMLGVDKKLVVVTKLLSEYGIGRTRARAHVYKNYERLQKLEPEKVKKLHEQCSQAQEAQAQ</sequence>
<evidence type="ECO:0000255" key="1">
    <source>
        <dbReference type="HAMAP-Rule" id="MF_00545"/>
    </source>
</evidence>
<evidence type="ECO:0000305" key="2"/>
<gene>
    <name evidence="1" type="primary">rps24e</name>
    <name type="ordered locus">Igni_0271</name>
</gene>